<feature type="chain" id="PRO_1000197800" description="Putative membrane protein insertion efficiency factor">
    <location>
        <begin position="1"/>
        <end position="85"/>
    </location>
</feature>
<proteinExistence type="inferred from homology"/>
<keyword id="KW-0997">Cell inner membrane</keyword>
<keyword id="KW-1003">Cell membrane</keyword>
<keyword id="KW-0472">Membrane</keyword>
<protein>
    <recommendedName>
        <fullName evidence="1">Putative membrane protein insertion efficiency factor</fullName>
    </recommendedName>
</protein>
<accession>C3LP78</accession>
<name>YIDD_VIBCM</name>
<gene>
    <name type="ordered locus">VCM66_0005</name>
</gene>
<dbReference type="EMBL" id="CP001233">
    <property type="protein sequence ID" value="ACP04342.1"/>
    <property type="molecule type" value="Genomic_DNA"/>
</dbReference>
<dbReference type="KEGG" id="vcm:VCM66_0005"/>
<dbReference type="HOGENOM" id="CLU_144811_5_2_6"/>
<dbReference type="Proteomes" id="UP000001217">
    <property type="component" value="Chromosome I"/>
</dbReference>
<dbReference type="GO" id="GO:0005886">
    <property type="term" value="C:plasma membrane"/>
    <property type="evidence" value="ECO:0007669"/>
    <property type="project" value="UniProtKB-SubCell"/>
</dbReference>
<dbReference type="HAMAP" id="MF_00386">
    <property type="entry name" value="UPF0161_YidD"/>
    <property type="match status" value="1"/>
</dbReference>
<dbReference type="InterPro" id="IPR002696">
    <property type="entry name" value="Membr_insert_effic_factor_YidD"/>
</dbReference>
<dbReference type="NCBIfam" id="TIGR00278">
    <property type="entry name" value="membrane protein insertion efficiency factor YidD"/>
    <property type="match status" value="1"/>
</dbReference>
<dbReference type="PANTHER" id="PTHR33383">
    <property type="entry name" value="MEMBRANE PROTEIN INSERTION EFFICIENCY FACTOR-RELATED"/>
    <property type="match status" value="1"/>
</dbReference>
<dbReference type="PANTHER" id="PTHR33383:SF1">
    <property type="entry name" value="MEMBRANE PROTEIN INSERTION EFFICIENCY FACTOR-RELATED"/>
    <property type="match status" value="1"/>
</dbReference>
<dbReference type="Pfam" id="PF01809">
    <property type="entry name" value="YidD"/>
    <property type="match status" value="1"/>
</dbReference>
<dbReference type="SMART" id="SM01234">
    <property type="entry name" value="Haemolytic"/>
    <property type="match status" value="1"/>
</dbReference>
<reference key="1">
    <citation type="journal article" date="2008" name="PLoS ONE">
        <title>A recalibrated molecular clock and independent origins for the cholera pandemic clones.</title>
        <authorList>
            <person name="Feng L."/>
            <person name="Reeves P.R."/>
            <person name="Lan R."/>
            <person name="Ren Y."/>
            <person name="Gao C."/>
            <person name="Zhou Z."/>
            <person name="Ren Y."/>
            <person name="Cheng J."/>
            <person name="Wang W."/>
            <person name="Wang J."/>
            <person name="Qian W."/>
            <person name="Li D."/>
            <person name="Wang L."/>
        </authorList>
    </citation>
    <scope>NUCLEOTIDE SEQUENCE [LARGE SCALE GENOMIC DNA]</scope>
    <source>
        <strain>M66-2</strain>
    </source>
</reference>
<evidence type="ECO:0000255" key="1">
    <source>
        <dbReference type="HAMAP-Rule" id="MF_00386"/>
    </source>
</evidence>
<organism>
    <name type="scientific">Vibrio cholerae serotype O1 (strain M66-2)</name>
    <dbReference type="NCBI Taxonomy" id="579112"/>
    <lineage>
        <taxon>Bacteria</taxon>
        <taxon>Pseudomonadati</taxon>
        <taxon>Pseudomonadota</taxon>
        <taxon>Gammaproteobacteria</taxon>
        <taxon>Vibrionales</taxon>
        <taxon>Vibrionaceae</taxon>
        <taxon>Vibrio</taxon>
    </lineage>
</organism>
<sequence length="85" mass="9616">MATPLSPFSWLAIGIVKLYQWFISPLIGPRCRFTPTCSTYAIEALRAHGFIKGCWLSTKRLLKCHPLNEGGFDPVPPVQKQDRDK</sequence>
<comment type="function">
    <text evidence="1">Could be involved in insertion of integral membrane proteins into the membrane.</text>
</comment>
<comment type="subcellular location">
    <subcellularLocation>
        <location evidence="1">Cell inner membrane</location>
        <topology evidence="1">Peripheral membrane protein</topology>
        <orientation evidence="1">Cytoplasmic side</orientation>
    </subcellularLocation>
</comment>
<comment type="similarity">
    <text evidence="1">Belongs to the UPF0161 family.</text>
</comment>